<gene>
    <name evidence="1" type="primary">ispE</name>
    <name type="ordered locus">FTW_1830</name>
</gene>
<sequence length="275" mass="31465">MANIKAKKYYSYAKINLFLHILNKRTDGYHNLQTWFTFLDLKDQLTFSFNNSREINISSNISIAAKQDNLVYKAIKKFQQSYRVQDIGVDIEIKKNIPMGAGLGGGSSNAATTLIALRDYYLPQLSNEEMIPLAAKLGADVSIFVYGKSAWAEGIGEILYHKDFSPQYALLIKPDIHISTKEFFTSEDLIKSSVLISKDLGFDKSIMHNDFENVFYAKYPEFSQYLKELDSDFRMTGTGSCFYLLSADKNKLEQLARKINKPLDKWLVKTLNYVY</sequence>
<organism>
    <name type="scientific">Francisella tularensis subsp. tularensis (strain WY96-3418)</name>
    <dbReference type="NCBI Taxonomy" id="418136"/>
    <lineage>
        <taxon>Bacteria</taxon>
        <taxon>Pseudomonadati</taxon>
        <taxon>Pseudomonadota</taxon>
        <taxon>Gammaproteobacteria</taxon>
        <taxon>Thiotrichales</taxon>
        <taxon>Francisellaceae</taxon>
        <taxon>Francisella</taxon>
    </lineage>
</organism>
<dbReference type="EC" id="2.7.1.148" evidence="1"/>
<dbReference type="EMBL" id="CP000608">
    <property type="protein sequence ID" value="ABO47495.1"/>
    <property type="molecule type" value="Genomic_DNA"/>
</dbReference>
<dbReference type="RefSeq" id="WP_003027303.1">
    <property type="nucleotide sequence ID" value="NC_009257.1"/>
</dbReference>
<dbReference type="SMR" id="A4IZZ4"/>
<dbReference type="KEGG" id="ftw:FTW_1830"/>
<dbReference type="HOGENOM" id="CLU_053057_3_0_6"/>
<dbReference type="UniPathway" id="UPA00056">
    <property type="reaction ID" value="UER00094"/>
</dbReference>
<dbReference type="GO" id="GO:0050515">
    <property type="term" value="F:4-(cytidine 5'-diphospho)-2-C-methyl-D-erythritol kinase activity"/>
    <property type="evidence" value="ECO:0007669"/>
    <property type="project" value="UniProtKB-UniRule"/>
</dbReference>
<dbReference type="GO" id="GO:0005524">
    <property type="term" value="F:ATP binding"/>
    <property type="evidence" value="ECO:0007669"/>
    <property type="project" value="UniProtKB-UniRule"/>
</dbReference>
<dbReference type="GO" id="GO:0019288">
    <property type="term" value="P:isopentenyl diphosphate biosynthetic process, methylerythritol 4-phosphate pathway"/>
    <property type="evidence" value="ECO:0007669"/>
    <property type="project" value="UniProtKB-UniRule"/>
</dbReference>
<dbReference type="GO" id="GO:0016114">
    <property type="term" value="P:terpenoid biosynthetic process"/>
    <property type="evidence" value="ECO:0007669"/>
    <property type="project" value="InterPro"/>
</dbReference>
<dbReference type="Gene3D" id="3.30.230.10">
    <property type="match status" value="1"/>
</dbReference>
<dbReference type="Gene3D" id="3.30.70.890">
    <property type="entry name" value="GHMP kinase, C-terminal domain"/>
    <property type="match status" value="1"/>
</dbReference>
<dbReference type="HAMAP" id="MF_00061">
    <property type="entry name" value="IspE"/>
    <property type="match status" value="1"/>
</dbReference>
<dbReference type="InterPro" id="IPR013750">
    <property type="entry name" value="GHMP_kinase_C_dom"/>
</dbReference>
<dbReference type="InterPro" id="IPR036554">
    <property type="entry name" value="GHMP_kinase_C_sf"/>
</dbReference>
<dbReference type="InterPro" id="IPR006204">
    <property type="entry name" value="GHMP_kinase_N_dom"/>
</dbReference>
<dbReference type="InterPro" id="IPR004424">
    <property type="entry name" value="IspE"/>
</dbReference>
<dbReference type="InterPro" id="IPR020568">
    <property type="entry name" value="Ribosomal_Su5_D2-typ_SF"/>
</dbReference>
<dbReference type="InterPro" id="IPR014721">
    <property type="entry name" value="Ribsml_uS5_D2-typ_fold_subgr"/>
</dbReference>
<dbReference type="NCBIfam" id="TIGR00154">
    <property type="entry name" value="ispE"/>
    <property type="match status" value="1"/>
</dbReference>
<dbReference type="PANTHER" id="PTHR43527">
    <property type="entry name" value="4-DIPHOSPHOCYTIDYL-2-C-METHYL-D-ERYTHRITOL KINASE, CHLOROPLASTIC"/>
    <property type="match status" value="1"/>
</dbReference>
<dbReference type="PANTHER" id="PTHR43527:SF2">
    <property type="entry name" value="4-DIPHOSPHOCYTIDYL-2-C-METHYL-D-ERYTHRITOL KINASE, CHLOROPLASTIC"/>
    <property type="match status" value="1"/>
</dbReference>
<dbReference type="Pfam" id="PF08544">
    <property type="entry name" value="GHMP_kinases_C"/>
    <property type="match status" value="1"/>
</dbReference>
<dbReference type="Pfam" id="PF00288">
    <property type="entry name" value="GHMP_kinases_N"/>
    <property type="match status" value="1"/>
</dbReference>
<dbReference type="PIRSF" id="PIRSF010376">
    <property type="entry name" value="IspE"/>
    <property type="match status" value="1"/>
</dbReference>
<dbReference type="SUPFAM" id="SSF55060">
    <property type="entry name" value="GHMP Kinase, C-terminal domain"/>
    <property type="match status" value="1"/>
</dbReference>
<dbReference type="SUPFAM" id="SSF54211">
    <property type="entry name" value="Ribosomal protein S5 domain 2-like"/>
    <property type="match status" value="1"/>
</dbReference>
<name>ISPE_FRATW</name>
<protein>
    <recommendedName>
        <fullName evidence="1">4-diphosphocytidyl-2-C-methyl-D-erythritol kinase</fullName>
        <shortName evidence="1">CMK</shortName>
        <ecNumber evidence="1">2.7.1.148</ecNumber>
    </recommendedName>
    <alternativeName>
        <fullName evidence="1">4-(cytidine-5'-diphospho)-2-C-methyl-D-erythritol kinase</fullName>
    </alternativeName>
</protein>
<accession>A4IZZ4</accession>
<proteinExistence type="inferred from homology"/>
<keyword id="KW-0067">ATP-binding</keyword>
<keyword id="KW-0414">Isoprene biosynthesis</keyword>
<keyword id="KW-0418">Kinase</keyword>
<keyword id="KW-0547">Nucleotide-binding</keyword>
<keyword id="KW-0808">Transferase</keyword>
<feature type="chain" id="PRO_1000007851" description="4-diphosphocytidyl-2-C-methyl-D-erythritol kinase">
    <location>
        <begin position="1"/>
        <end position="275"/>
    </location>
</feature>
<feature type="active site" evidence="1">
    <location>
        <position position="14"/>
    </location>
</feature>
<feature type="active site" evidence="1">
    <location>
        <position position="140"/>
    </location>
</feature>
<feature type="binding site" evidence="1">
    <location>
        <begin position="98"/>
        <end position="108"/>
    </location>
    <ligand>
        <name>ATP</name>
        <dbReference type="ChEBI" id="CHEBI:30616"/>
    </ligand>
</feature>
<evidence type="ECO:0000255" key="1">
    <source>
        <dbReference type="HAMAP-Rule" id="MF_00061"/>
    </source>
</evidence>
<comment type="function">
    <text evidence="1">Catalyzes the phosphorylation of the position 2 hydroxy group of 4-diphosphocytidyl-2C-methyl-D-erythritol.</text>
</comment>
<comment type="catalytic activity">
    <reaction evidence="1">
        <text>4-CDP-2-C-methyl-D-erythritol + ATP = 4-CDP-2-C-methyl-D-erythritol 2-phosphate + ADP + H(+)</text>
        <dbReference type="Rhea" id="RHEA:18437"/>
        <dbReference type="ChEBI" id="CHEBI:15378"/>
        <dbReference type="ChEBI" id="CHEBI:30616"/>
        <dbReference type="ChEBI" id="CHEBI:57823"/>
        <dbReference type="ChEBI" id="CHEBI:57919"/>
        <dbReference type="ChEBI" id="CHEBI:456216"/>
        <dbReference type="EC" id="2.7.1.148"/>
    </reaction>
</comment>
<comment type="pathway">
    <text evidence="1">Isoprenoid biosynthesis; isopentenyl diphosphate biosynthesis via DXP pathway; isopentenyl diphosphate from 1-deoxy-D-xylulose 5-phosphate: step 3/6.</text>
</comment>
<comment type="similarity">
    <text evidence="1">Belongs to the GHMP kinase family. IspE subfamily.</text>
</comment>
<reference key="1">
    <citation type="journal article" date="2007" name="PLoS ONE">
        <title>Complete genomic characterization of a pathogenic A.II strain of Francisella tularensis subspecies tularensis.</title>
        <authorList>
            <person name="Beckstrom-Sternberg S.M."/>
            <person name="Auerbach R.K."/>
            <person name="Godbole S."/>
            <person name="Pearson J.V."/>
            <person name="Beckstrom-Sternberg J.S."/>
            <person name="Deng Z."/>
            <person name="Munk C."/>
            <person name="Kubota K."/>
            <person name="Zhou Y."/>
            <person name="Bruce D."/>
            <person name="Noronha J."/>
            <person name="Scheuermann R.H."/>
            <person name="Wang A."/>
            <person name="Wei X."/>
            <person name="Wang J."/>
            <person name="Hao J."/>
            <person name="Wagner D.M."/>
            <person name="Brettin T.S."/>
            <person name="Brown N."/>
            <person name="Gilna P."/>
            <person name="Keim P.S."/>
        </authorList>
    </citation>
    <scope>NUCLEOTIDE SEQUENCE [LARGE SCALE GENOMIC DNA]</scope>
    <source>
        <strain>WY96-3418</strain>
    </source>
</reference>